<proteinExistence type="inferred from homology"/>
<accession>Q90872</accession>
<evidence type="ECO:0000250" key="1"/>
<evidence type="ECO:0000255" key="2"/>
<evidence type="ECO:0000305" key="3"/>
<sequence length="193" mass="22166">MAVPASPQHPRGYGILLLTLLLKALATTASACNHLRPQDATFSHDSLQLFRDMAPTLLQLCPQHNASCSFNDTILDTSNTRQADKTTHDILQHLFKILSSPSTPAHWNDSQRQSLLNRIHRYTQHLEQCLDSSDTRSRTRWPRNLHLTIKKHFSCLHTFLQDNDYSACAWEHVRLQARAWFLHIHNLTGNTRT</sequence>
<reference key="1">
    <citation type="journal article" date="1996" name="J. Biol. Chem.">
        <title>A family of genes coding for two serologically distinct chicken interferons.</title>
        <authorList>
            <person name="Sick C."/>
            <person name="Schultz U."/>
            <person name="Staeheli P."/>
        </authorList>
    </citation>
    <scope>NUCLEOTIDE SEQUENCE [GENOMIC DNA]</scope>
    <source>
        <strain>White leghorn</strain>
        <tissue>Spleen</tissue>
    </source>
</reference>
<dbReference type="EMBL" id="X92478">
    <property type="protein sequence ID" value="CAA63216.1"/>
    <property type="molecule type" value="Genomic_DNA"/>
</dbReference>
<dbReference type="SMR" id="Q90872"/>
<dbReference type="STRING" id="9031.ENSGALP00000019312"/>
<dbReference type="GlyCosmos" id="Q90872">
    <property type="glycosylation" value="4 sites, No reported glycans"/>
</dbReference>
<dbReference type="GlyGen" id="Q90872">
    <property type="glycosylation" value="5 sites"/>
</dbReference>
<dbReference type="PaxDb" id="9031-ENSGALP00000019312"/>
<dbReference type="VEuPathDB" id="HostDB:geneid_396398"/>
<dbReference type="eggNOG" id="ENOG502SQGR">
    <property type="taxonomic scope" value="Eukaryota"/>
</dbReference>
<dbReference type="InParanoid" id="Q90872"/>
<dbReference type="OrthoDB" id="9110568at2759"/>
<dbReference type="PhylomeDB" id="Q90872"/>
<dbReference type="Proteomes" id="UP000000539">
    <property type="component" value="Unassembled WGS sequence"/>
</dbReference>
<dbReference type="GO" id="GO:0005615">
    <property type="term" value="C:extracellular space"/>
    <property type="evidence" value="ECO:0000318"/>
    <property type="project" value="GO_Central"/>
</dbReference>
<dbReference type="GO" id="GO:0005125">
    <property type="term" value="F:cytokine activity"/>
    <property type="evidence" value="ECO:0000318"/>
    <property type="project" value="GO_Central"/>
</dbReference>
<dbReference type="GO" id="GO:0005132">
    <property type="term" value="F:type I interferon receptor binding"/>
    <property type="evidence" value="ECO:0000318"/>
    <property type="project" value="GO_Central"/>
</dbReference>
<dbReference type="GO" id="GO:0002250">
    <property type="term" value="P:adaptive immune response"/>
    <property type="evidence" value="ECO:0000318"/>
    <property type="project" value="GO_Central"/>
</dbReference>
<dbReference type="GO" id="GO:0002312">
    <property type="term" value="P:B cell activation involved in immune response"/>
    <property type="evidence" value="ECO:0000318"/>
    <property type="project" value="GO_Central"/>
</dbReference>
<dbReference type="GO" id="GO:0051607">
    <property type="term" value="P:defense response to virus"/>
    <property type="evidence" value="ECO:0007669"/>
    <property type="project" value="UniProtKB-KW"/>
</dbReference>
<dbReference type="GO" id="GO:0006959">
    <property type="term" value="P:humoral immune response"/>
    <property type="evidence" value="ECO:0000318"/>
    <property type="project" value="GO_Central"/>
</dbReference>
<dbReference type="GO" id="GO:0002323">
    <property type="term" value="P:natural killer cell activation involved in immune response"/>
    <property type="evidence" value="ECO:0000318"/>
    <property type="project" value="GO_Central"/>
</dbReference>
<dbReference type="GO" id="GO:0043330">
    <property type="term" value="P:response to exogenous dsRNA"/>
    <property type="evidence" value="ECO:0000318"/>
    <property type="project" value="GO_Central"/>
</dbReference>
<dbReference type="GO" id="GO:0002286">
    <property type="term" value="P:T cell activation involved in immune response"/>
    <property type="evidence" value="ECO:0000318"/>
    <property type="project" value="GO_Central"/>
</dbReference>
<dbReference type="GO" id="GO:0060337">
    <property type="term" value="P:type I interferon-mediated signaling pathway"/>
    <property type="evidence" value="ECO:0000318"/>
    <property type="project" value="GO_Central"/>
</dbReference>
<dbReference type="CDD" id="cd00095">
    <property type="entry name" value="IFab"/>
    <property type="match status" value="1"/>
</dbReference>
<dbReference type="FunFam" id="1.20.1250.10:FF:000046">
    <property type="entry name" value="Interferon alpha"/>
    <property type="match status" value="1"/>
</dbReference>
<dbReference type="Gene3D" id="1.20.1250.10">
    <property type="match status" value="1"/>
</dbReference>
<dbReference type="InterPro" id="IPR009079">
    <property type="entry name" value="4_helix_cytokine-like_core"/>
</dbReference>
<dbReference type="InterPro" id="IPR000471">
    <property type="entry name" value="Interferon_alpha/beta/delta"/>
</dbReference>
<dbReference type="PANTHER" id="PTHR11691:SF73">
    <property type="entry name" value="INTERFERON BETA"/>
    <property type="match status" value="1"/>
</dbReference>
<dbReference type="PANTHER" id="PTHR11691">
    <property type="entry name" value="TYPE I INTERFERON"/>
    <property type="match status" value="1"/>
</dbReference>
<dbReference type="Pfam" id="PF00143">
    <property type="entry name" value="Interferon"/>
    <property type="match status" value="1"/>
</dbReference>
<dbReference type="PRINTS" id="PR00266">
    <property type="entry name" value="INTERFERONAB"/>
</dbReference>
<dbReference type="SMART" id="SM00076">
    <property type="entry name" value="IFabd"/>
    <property type="match status" value="1"/>
</dbReference>
<dbReference type="SUPFAM" id="SSF47266">
    <property type="entry name" value="4-helical cytokines"/>
    <property type="match status" value="1"/>
</dbReference>
<dbReference type="PROSITE" id="PS00252">
    <property type="entry name" value="INTERFERON_A_B_D"/>
    <property type="match status" value="1"/>
</dbReference>
<organism>
    <name type="scientific">Gallus gallus</name>
    <name type="common">Chicken</name>
    <dbReference type="NCBI Taxonomy" id="9031"/>
    <lineage>
        <taxon>Eukaryota</taxon>
        <taxon>Metazoa</taxon>
        <taxon>Chordata</taxon>
        <taxon>Craniata</taxon>
        <taxon>Vertebrata</taxon>
        <taxon>Euteleostomi</taxon>
        <taxon>Archelosauria</taxon>
        <taxon>Archosauria</taxon>
        <taxon>Dinosauria</taxon>
        <taxon>Saurischia</taxon>
        <taxon>Theropoda</taxon>
        <taxon>Coelurosauria</taxon>
        <taxon>Aves</taxon>
        <taxon>Neognathae</taxon>
        <taxon>Galloanserae</taxon>
        <taxon>Galliformes</taxon>
        <taxon>Phasianidae</taxon>
        <taxon>Phasianinae</taxon>
        <taxon>Gallus</taxon>
    </lineage>
</organism>
<protein>
    <recommendedName>
        <fullName>Interferon type A3</fullName>
    </recommendedName>
</protein>
<feature type="signal peptide" evidence="2">
    <location>
        <begin position="1"/>
        <end position="31"/>
    </location>
</feature>
<feature type="chain" id="PRO_0000016429" description="Interferon type A3">
    <location>
        <begin position="32"/>
        <end position="193"/>
    </location>
</feature>
<feature type="glycosylation site" description="N-linked (GlcNAc...) asparagine" evidence="2">
    <location>
        <position position="65"/>
    </location>
</feature>
<feature type="glycosylation site" description="N-linked (GlcNAc...) asparagine" evidence="2">
    <location>
        <position position="71"/>
    </location>
</feature>
<feature type="glycosylation site" description="N-linked (GlcNAc...) asparagine" evidence="2">
    <location>
        <position position="108"/>
    </location>
</feature>
<feature type="glycosylation site" description="N-linked (GlcNAc...) asparagine" evidence="2">
    <location>
        <position position="186"/>
    </location>
</feature>
<feature type="disulfide bond" evidence="1">
    <location>
        <begin position="32"/>
        <end position="129"/>
    </location>
</feature>
<feature type="disulfide bond" evidence="2">
    <location>
        <begin position="61"/>
        <end position="155"/>
    </location>
</feature>
<feature type="disulfide bond" evidence="1">
    <location>
        <begin position="68"/>
        <end position="168"/>
    </location>
</feature>
<name>IFNA3_CHICK</name>
<gene>
    <name type="primary">IFNA3</name>
</gene>
<keyword id="KW-0051">Antiviral defense</keyword>
<keyword id="KW-0202">Cytokine</keyword>
<keyword id="KW-1015">Disulfide bond</keyword>
<keyword id="KW-0325">Glycoprotein</keyword>
<keyword id="KW-1185">Reference proteome</keyword>
<keyword id="KW-0964">Secreted</keyword>
<keyword id="KW-0732">Signal</keyword>
<comment type="function">
    <text>Has antiviral activities.</text>
</comment>
<comment type="subcellular location">
    <subcellularLocation>
        <location evidence="3">Secreted</location>
    </subcellularLocation>
</comment>
<comment type="similarity">
    <text evidence="3">Belongs to the alpha/beta interferon family.</text>
</comment>